<evidence type="ECO:0000255" key="1"/>
<evidence type="ECO:0000255" key="2">
    <source>
        <dbReference type="PROSITE-ProRule" id="PRU00024"/>
    </source>
</evidence>
<evidence type="ECO:0000255" key="3">
    <source>
        <dbReference type="PROSITE-ProRule" id="PRU00504"/>
    </source>
</evidence>
<evidence type="ECO:0000256" key="4">
    <source>
        <dbReference type="SAM" id="MobiDB-lite"/>
    </source>
</evidence>
<evidence type="ECO:0000269" key="5">
    <source>
    </source>
</evidence>
<evidence type="ECO:0000269" key="6">
    <source>
    </source>
</evidence>
<evidence type="ECO:0000269" key="7">
    <source>
    </source>
</evidence>
<evidence type="ECO:0000269" key="8">
    <source>
    </source>
</evidence>
<evidence type="ECO:0000269" key="9">
    <source>
    </source>
</evidence>
<evidence type="ECO:0000269" key="10">
    <source>
    </source>
</evidence>
<evidence type="ECO:0000303" key="11">
    <source>
    </source>
</evidence>
<evidence type="ECO:0000312" key="12">
    <source>
        <dbReference type="WormBase" id="ZK112.2g"/>
    </source>
</evidence>
<keyword id="KW-0175">Coiled coil</keyword>
<keyword id="KW-0963">Cytoplasm</keyword>
<keyword id="KW-0479">Metal-binding</keyword>
<keyword id="KW-1185">Reference proteome</keyword>
<keyword id="KW-0677">Repeat</keyword>
<keyword id="KW-0678">Repressor</keyword>
<keyword id="KW-0690">Ribosome biogenesis</keyword>
<keyword id="KW-0810">Translation regulation</keyword>
<keyword id="KW-0862">Zinc</keyword>
<keyword id="KW-0863">Zinc-finger</keyword>
<gene>
    <name evidence="11 12" type="primary">ncl-1</name>
    <name evidence="12" type="ORF">ZK112.2</name>
</gene>
<organism>
    <name type="scientific">Caenorhabditis elegans</name>
    <dbReference type="NCBI Taxonomy" id="6239"/>
    <lineage>
        <taxon>Eukaryota</taxon>
        <taxon>Metazoa</taxon>
        <taxon>Ecdysozoa</taxon>
        <taxon>Nematoda</taxon>
        <taxon>Chromadorea</taxon>
        <taxon>Rhabditida</taxon>
        <taxon>Rhabditina</taxon>
        <taxon>Rhabditomorpha</taxon>
        <taxon>Rhabditoidea</taxon>
        <taxon>Rhabditidae</taxon>
        <taxon>Peloderinae</taxon>
        <taxon>Caenorhabditis</taxon>
    </lineage>
</organism>
<comment type="function">
    <text evidence="5 6 7 8 9 10">Translational repressor that inhibits protein synthesis (PubMed:26492166, PubMed:9508766). Represses the translation of mRNAs such as fib-1, probably by being recruited by RNA-binding protein nos-2 and the Pumilio proteins puf-5, puf-8 and puf-9 to the consensus core PUF binding motif in the 3'-UTR of fib-1 mRNA (PubMed:26492166). Negatively regulates ribosomal RNA (rRNA) synthesis, ribosomal protein synthesis and nucleolus size (PubMed:22768349, PubMed:26492166, PubMed:28853436, PubMed:8582642, PubMed:9508766). Its role in the negative regulation of nucleolus size is most likely through its negative regulation of the translation of proteins such as the rRNA 2'-O-methyltransferase fib-1, and dao-5 (PubMed:26492166, PubMed:28853436). Might act directly as a transcription factor to inhibit RNA polymerase I (rRNA) and III (5S RNA) transcription (PubMed:9508766). Plays a role in embryonic development, and in particular, is involved in regulating the localization of proteins, such as par-2, that are required for embryonic cell polarity (PubMed:18652816). Plays a role in the regulation of lifespan, and the response to nutrient availability (PubMed:28853436).</text>
</comment>
<comment type="subcellular location">
    <subcellularLocation>
        <location evidence="5 10">Cytoplasm</location>
    </subcellularLocation>
</comment>
<comment type="tissue specificity">
    <text evidence="7 10">Present in cells in which nucleoli are absent, and absent from large cells in which nucleoli are prominent (PubMed:9508766). Highly expressed in the gonads (PubMed:26492166).</text>
</comment>
<comment type="developmental stage">
    <text evidence="5 7 10">Expressed in embryos (PubMed:18652816, PubMed:26492166, PubMed:9508766). Abundant in early embryos, but displays a progressive decline throughout the four larval stages, and is subsequently up-regulated in the adult (PubMed:26492166, PubMed:9508766).</text>
</comment>
<comment type="induction">
    <text evidence="7">Negatively regulated by the let-7 microRNA.</text>
</comment>
<comment type="disruption phenotype">
    <text evidence="5 7 8 9 10">No visible change in viability, fertility, development, body morphology or movement (PubMed:8582642). However, animals are approximately 9% larger after hatching than wild-type counterparts (PubMed:9508766). Mild defects in early embryonic cell development (PubMed:18652816). No visible change in lifespan, however in contrast to wild-type, longevity is significantly reduced in response to dietary restriction (PubMed:28853436). Furthermore, it suppresses the increased longevity and reduced nucleoli size of eat-2 (ad465), glp-1 (e2141), isp-1 (qm150), and daf-2 RNAi and let-363 RNAi longevity mutant models (PubMed:28853436). Most cells contain enlarged nucleoli, with the exception being intestinal and germline nucleoli, which are not markedly larger (PubMed:26492166, PubMed:28853436, PubMed:8582642, PubMed:9508766). In contrast to wild-type, the oocyte which is immediately adjacent to the spermatheca contains a nucleolus (PubMed:26492166). Nucleoli have an increased capacity for protein synthesis, specifically RNA polymerase I and III transcription (PubMed:9508766). Defective ribosomal biogenesis with increased expression of rRNAs such as 26S rRNAs, and ribosomal proteins including rps-6 and rsp-15 (PubMed:26492166, PubMed:28853436). Knockout with fib-1 RNAi suppresses the enlarged nucleolus phenotype in embryos and suppresses the increased 26S ribosomal RNA (rRNA) expression in the single ncl-1 mutant (PubMed:26492166). Double knockout with par-2 mutant (it5ts) suppresses the lethality phenotype, embryonic polarity defects of the par-2 mutant (it5ts) at 25 degrees Celsius (PubMed:18652816).</text>
</comment>
<protein>
    <recommendedName>
        <fullName>B-box type zinc finger protein ncl-1</fullName>
    </recommendedName>
</protein>
<reference key="1">
    <citation type="journal article" date="1998" name="J. Cell Biol.">
        <title>Ncl-1 is required for the regulation of cell size and ribosomal RNA synthesis in Caenorhabditis elegans.</title>
        <authorList>
            <person name="Frank D.J."/>
            <person name="Roth M.B."/>
        </authorList>
    </citation>
    <scope>NUCLEOTIDE SEQUENCE [MRNA]</scope>
    <scope>FUNCTION</scope>
    <scope>SUBCELLULAR LOCATION</scope>
    <scope>TISSUE SPECIFICITY</scope>
    <scope>DEVELOPMENTAL STAGE</scope>
    <source>
        <strain>Bristol N2</strain>
    </source>
</reference>
<reference key="2">
    <citation type="journal article" date="1994" name="Nature">
        <title>2.2 Mb of contiguous nucleotide sequence from chromosome III of C. elegans.</title>
        <authorList>
            <person name="Wilson R."/>
            <person name="Ainscough R."/>
            <person name="Anderson K."/>
            <person name="Baynes C."/>
            <person name="Berks M."/>
            <person name="Bonfield J."/>
            <person name="Burton J."/>
            <person name="Connell M."/>
            <person name="Copsey T."/>
            <person name="Cooper J."/>
            <person name="Coulson A."/>
            <person name="Craxton M."/>
            <person name="Dear S."/>
            <person name="Du Z."/>
            <person name="Durbin R."/>
            <person name="Favello A."/>
            <person name="Fraser A."/>
            <person name="Fulton L."/>
            <person name="Gardner A."/>
            <person name="Green P."/>
            <person name="Hawkins T."/>
            <person name="Hillier L."/>
            <person name="Jier M."/>
            <person name="Johnston L."/>
            <person name="Jones M."/>
            <person name="Kershaw J."/>
            <person name="Kirsten J."/>
            <person name="Laisster N."/>
            <person name="Latreille P."/>
            <person name="Lightning J."/>
            <person name="Lloyd C."/>
            <person name="Mortimore B."/>
            <person name="O'Callaghan M."/>
            <person name="Parsons J."/>
            <person name="Percy C."/>
            <person name="Rifken L."/>
            <person name="Roopra A."/>
            <person name="Saunders D."/>
            <person name="Shownkeen R."/>
            <person name="Sims M."/>
            <person name="Smaldon N."/>
            <person name="Smith A."/>
            <person name="Smith M."/>
            <person name="Sonnhammer E."/>
            <person name="Staden R."/>
            <person name="Sulston J."/>
            <person name="Thierry-Mieg J."/>
            <person name="Thomas K."/>
            <person name="Vaudin M."/>
            <person name="Vaughan K."/>
            <person name="Waterston R."/>
            <person name="Watson A."/>
            <person name="Weinstock L."/>
            <person name="Wilkinson-Sproat J."/>
            <person name="Wohldman P."/>
        </authorList>
    </citation>
    <scope>NUCLEOTIDE SEQUENCE [LARGE SCALE GENOMIC DNA]</scope>
    <source>
        <strain>Bristol N2</strain>
    </source>
</reference>
<reference key="3">
    <citation type="journal article" date="1998" name="Science">
        <title>Genome sequence of the nematode C. elegans: a platform for investigating biology.</title>
        <authorList>
            <consortium name="The C. elegans sequencing consortium"/>
        </authorList>
    </citation>
    <scope>NUCLEOTIDE SEQUENCE [LARGE SCALE GENOMIC DNA]</scope>
    <source>
        <strain>Bristol N2</strain>
    </source>
</reference>
<reference key="4">
    <citation type="journal article" date="1995" name="Genetics">
        <title>The ncl-1 gene and genetic mosaics of Caenorhabditis elegans.</title>
        <authorList>
            <person name="Hedgecock E.M."/>
            <person name="Herman R.K."/>
        </authorList>
    </citation>
    <scope>FUNCTION</scope>
    <scope>DISRUPTION PHENOTYPE</scope>
</reference>
<reference key="5">
    <citation type="journal article" date="2008" name="Dev. Biol.">
        <title>C. elegans Brat homologs regulate PAR protein-dependent polarity and asymmetric cell division.</title>
        <authorList>
            <person name="Hyenne V."/>
            <person name="Desrosiers M."/>
            <person name="Labbe J.C."/>
        </authorList>
    </citation>
    <scope>FUNCTION</scope>
    <scope>SUBCELLULAR LOCATION</scope>
    <scope>DEVELOPMENTAL STAGE</scope>
    <scope>DISRUPTION PHENOTYPE</scope>
</reference>
<reference key="6">
    <citation type="journal article" date="2012" name="PLoS ONE">
        <title>Nucleologenesis in the Caenorhabditis elegans embryo.</title>
        <authorList>
            <person name="Korcekova D."/>
            <person name="Gombitova A."/>
            <person name="Raska I."/>
            <person name="Cmarko D."/>
            <person name="Lanctot C."/>
        </authorList>
    </citation>
    <scope>FUNCTION</scope>
</reference>
<reference key="7">
    <citation type="journal article" date="2015" name="PLoS Genet.">
        <title>A Genetic Cascade of let-7-ncl-1-fib-1 Modulates Nucleolar Size and rRNA Pool in Caenorhabditis elegans.</title>
        <authorList>
            <person name="Yi Y.H."/>
            <person name="Ma T.H."/>
            <person name="Lee L.W."/>
            <person name="Chiou P.T."/>
            <person name="Chen P.H."/>
            <person name="Lee C.M."/>
            <person name="Chu Y.D."/>
            <person name="Yu H."/>
            <person name="Hsiung K.C."/>
            <person name="Tsai Y.T."/>
            <person name="Lee C.C."/>
            <person name="Chang Y.S."/>
            <person name="Chan S.P."/>
            <person name="Tan B.C."/>
            <person name="Lo S.J."/>
        </authorList>
    </citation>
    <scope>FUNCTION</scope>
    <scope>TISSUE SPECIFICITY</scope>
    <scope>DEVELOPMENTAL STAGE</scope>
    <scope>INDUCTION</scope>
    <scope>DISRUPTION PHENOTYPE</scope>
</reference>
<reference key="8">
    <citation type="journal article" date="2016" name="Nat. Commun.">
        <title>Small nucleoli are a cellular hallmark of longevity.</title>
        <authorList>
            <person name="Tiku V."/>
            <person name="Jain C."/>
            <person name="Raz Y."/>
            <person name="Nakamura S."/>
            <person name="Heestand B."/>
            <person name="Liu W."/>
            <person name="Spaeth M."/>
            <person name="Suchiman H.E.D."/>
            <person name="Mueller R.U."/>
            <person name="Slagboom P.E."/>
            <person name="Partridge L."/>
            <person name="Antebi A."/>
        </authorList>
    </citation>
    <scope>FUNCTION</scope>
    <scope>DISRUPTION PHENOTYPE</scope>
</reference>
<dbReference type="EMBL" id="AF047027">
    <property type="protein sequence ID" value="AAC14263.1"/>
    <property type="molecule type" value="mRNA"/>
</dbReference>
<dbReference type="EMBL" id="BX284603">
    <property type="protein sequence ID" value="CCD62763.1"/>
    <property type="molecule type" value="Genomic_DNA"/>
</dbReference>
<dbReference type="PIR" id="S44890">
    <property type="entry name" value="S44890"/>
</dbReference>
<dbReference type="RefSeq" id="NP_001379611.1">
    <property type="nucleotide sequence ID" value="NM_001392143.1"/>
</dbReference>
<dbReference type="RefSeq" id="NP_498684.1">
    <property type="nucleotide sequence ID" value="NM_066283.4"/>
</dbReference>
<dbReference type="SMR" id="P34611"/>
<dbReference type="BioGRID" id="41292">
    <property type="interactions" value="16"/>
</dbReference>
<dbReference type="DIP" id="DIP-25978N"/>
<dbReference type="FunCoup" id="P34611">
    <property type="interactions" value="1469"/>
</dbReference>
<dbReference type="IntAct" id="P34611">
    <property type="interactions" value="8"/>
</dbReference>
<dbReference type="STRING" id="6239.ZK112.2b.1"/>
<dbReference type="PaxDb" id="6239-ZK112.2"/>
<dbReference type="PeptideAtlas" id="P34611"/>
<dbReference type="EnsemblMetazoa" id="ZK112.2g.1">
    <property type="protein sequence ID" value="ZK112.2g.1"/>
    <property type="gene ID" value="WBGene00003559"/>
</dbReference>
<dbReference type="EnsemblMetazoa" id="ZK112.2g.2">
    <property type="protein sequence ID" value="ZK112.2g.2"/>
    <property type="gene ID" value="WBGene00003559"/>
</dbReference>
<dbReference type="EnsemblMetazoa" id="ZK112.2g.3">
    <property type="protein sequence ID" value="ZK112.2g.3"/>
    <property type="gene ID" value="WBGene00003559"/>
</dbReference>
<dbReference type="GeneID" id="176084"/>
<dbReference type="UCSC" id="ZK112.2">
    <property type="organism name" value="c. elegans"/>
</dbReference>
<dbReference type="AGR" id="WB:WBGene00003559"/>
<dbReference type="WormBase" id="ZK112.2g">
    <property type="protein sequence ID" value="CE00373"/>
    <property type="gene ID" value="WBGene00003559"/>
    <property type="gene designation" value="ncl-1"/>
</dbReference>
<dbReference type="eggNOG" id="KOG2177">
    <property type="taxonomic scope" value="Eukaryota"/>
</dbReference>
<dbReference type="GeneTree" id="ENSGT00940000170685"/>
<dbReference type="HOGENOM" id="CLU_007697_0_0_1"/>
<dbReference type="InParanoid" id="P34611"/>
<dbReference type="PhylomeDB" id="P34611"/>
<dbReference type="Reactome" id="R-CEL-6798695">
    <property type="pathway name" value="Neutrophil degranulation"/>
</dbReference>
<dbReference type="SignaLink" id="P34611"/>
<dbReference type="PRO" id="PR:P34611"/>
<dbReference type="Proteomes" id="UP000001940">
    <property type="component" value="Chromosome III"/>
</dbReference>
<dbReference type="Bgee" id="WBGene00003559">
    <property type="expression patterns" value="Expressed in pharyngeal muscle cell (C elegans) and 4 other cell types or tissues"/>
</dbReference>
<dbReference type="ExpressionAtlas" id="P34611">
    <property type="expression patterns" value="baseline and differential"/>
</dbReference>
<dbReference type="GO" id="GO:0005737">
    <property type="term" value="C:cytoplasm"/>
    <property type="evidence" value="ECO:0000314"/>
    <property type="project" value="UniProtKB"/>
</dbReference>
<dbReference type="GO" id="GO:0030371">
    <property type="term" value="F:translation repressor activity"/>
    <property type="evidence" value="ECO:0000315"/>
    <property type="project" value="UniProtKB"/>
</dbReference>
<dbReference type="GO" id="GO:0008270">
    <property type="term" value="F:zinc ion binding"/>
    <property type="evidence" value="ECO:0007669"/>
    <property type="project" value="UniProtKB-KW"/>
</dbReference>
<dbReference type="GO" id="GO:0090071">
    <property type="term" value="P:negative regulation of ribosome biogenesis"/>
    <property type="evidence" value="ECO:0000315"/>
    <property type="project" value="UniProtKB"/>
</dbReference>
<dbReference type="GO" id="GO:0016479">
    <property type="term" value="P:negative regulation of transcription by RNA polymerase I"/>
    <property type="evidence" value="ECO:0000315"/>
    <property type="project" value="UniProtKB"/>
</dbReference>
<dbReference type="GO" id="GO:0016480">
    <property type="term" value="P:negative regulation of transcription by RNA polymerase III"/>
    <property type="evidence" value="ECO:0000315"/>
    <property type="project" value="UniProtKB"/>
</dbReference>
<dbReference type="GO" id="GO:0017148">
    <property type="term" value="P:negative regulation of translation"/>
    <property type="evidence" value="ECO:0000318"/>
    <property type="project" value="GO_Central"/>
</dbReference>
<dbReference type="GO" id="GO:0017126">
    <property type="term" value="P:nucleologenesis"/>
    <property type="evidence" value="ECO:0000315"/>
    <property type="project" value="UniProtKB"/>
</dbReference>
<dbReference type="GO" id="GO:0072697">
    <property type="term" value="P:protein localization to cell cortex"/>
    <property type="evidence" value="ECO:0000315"/>
    <property type="project" value="UniProtKB"/>
</dbReference>
<dbReference type="GO" id="GO:2000114">
    <property type="term" value="P:regulation of establishment of cell polarity"/>
    <property type="evidence" value="ECO:0000315"/>
    <property type="project" value="UniProtKB"/>
</dbReference>
<dbReference type="GO" id="GO:0042254">
    <property type="term" value="P:ribosome biogenesis"/>
    <property type="evidence" value="ECO:0007669"/>
    <property type="project" value="UniProtKB-KW"/>
</dbReference>
<dbReference type="CDD" id="cd19813">
    <property type="entry name" value="Bbox1_BRAT-like"/>
    <property type="match status" value="1"/>
</dbReference>
<dbReference type="CDD" id="cd19798">
    <property type="entry name" value="Bbox2_BRAT-like"/>
    <property type="match status" value="1"/>
</dbReference>
<dbReference type="CDD" id="cd20482">
    <property type="entry name" value="CC_brat-like"/>
    <property type="match status" value="1"/>
</dbReference>
<dbReference type="CDD" id="cd14959">
    <property type="entry name" value="NHL_brat_like"/>
    <property type="match status" value="1"/>
</dbReference>
<dbReference type="FunFam" id="3.30.160.60:FF:002782">
    <property type="entry name" value="B-box type zinc finger protein ncl-1"/>
    <property type="match status" value="1"/>
</dbReference>
<dbReference type="FunFam" id="2.120.10.30:FF:000107">
    <property type="entry name" value="Uncharacterized protein"/>
    <property type="match status" value="1"/>
</dbReference>
<dbReference type="Gene3D" id="4.10.830.40">
    <property type="match status" value="1"/>
</dbReference>
<dbReference type="Gene3D" id="3.30.160.60">
    <property type="entry name" value="Classic Zinc Finger"/>
    <property type="match status" value="1"/>
</dbReference>
<dbReference type="Gene3D" id="2.120.10.30">
    <property type="entry name" value="TolB, C-terminal domain"/>
    <property type="match status" value="1"/>
</dbReference>
<dbReference type="InterPro" id="IPR011042">
    <property type="entry name" value="6-blade_b-propeller_TolB-like"/>
</dbReference>
<dbReference type="InterPro" id="IPR003649">
    <property type="entry name" value="Bbox_C"/>
</dbReference>
<dbReference type="InterPro" id="IPR001258">
    <property type="entry name" value="NHL_repeat"/>
</dbReference>
<dbReference type="InterPro" id="IPR050952">
    <property type="entry name" value="TRIM-NHL_E3_ligases"/>
</dbReference>
<dbReference type="InterPro" id="IPR000315">
    <property type="entry name" value="Znf_B-box"/>
</dbReference>
<dbReference type="PANTHER" id="PTHR24104:SF41">
    <property type="entry name" value="BRAIN TUMOR PROTEIN"/>
    <property type="match status" value="1"/>
</dbReference>
<dbReference type="PANTHER" id="PTHR24104">
    <property type="entry name" value="E3 UBIQUITIN-PROTEIN LIGASE NHLRC1-RELATED"/>
    <property type="match status" value="1"/>
</dbReference>
<dbReference type="Pfam" id="PF01436">
    <property type="entry name" value="NHL"/>
    <property type="match status" value="5"/>
</dbReference>
<dbReference type="Pfam" id="PF00643">
    <property type="entry name" value="zf-B_box"/>
    <property type="match status" value="1"/>
</dbReference>
<dbReference type="SMART" id="SM00502">
    <property type="entry name" value="BBC"/>
    <property type="match status" value="1"/>
</dbReference>
<dbReference type="SMART" id="SM00336">
    <property type="entry name" value="BBOX"/>
    <property type="match status" value="2"/>
</dbReference>
<dbReference type="SUPFAM" id="SSF57845">
    <property type="entry name" value="B-box zinc-binding domain"/>
    <property type="match status" value="1"/>
</dbReference>
<dbReference type="SUPFAM" id="SSF101898">
    <property type="entry name" value="NHL repeat"/>
    <property type="match status" value="1"/>
</dbReference>
<dbReference type="PROSITE" id="PS51125">
    <property type="entry name" value="NHL"/>
    <property type="match status" value="5"/>
</dbReference>
<dbReference type="PROSITE" id="PS50119">
    <property type="entry name" value="ZF_BBOX"/>
    <property type="match status" value="2"/>
</dbReference>
<feature type="chain" id="PRO_0000220367" description="B-box type zinc finger protein ncl-1">
    <location>
        <begin position="1"/>
        <end position="851"/>
    </location>
</feature>
<feature type="repeat" description="NHL 1" evidence="3">
    <location>
        <begin position="573"/>
        <end position="616"/>
    </location>
</feature>
<feature type="repeat" description="NHL 2" evidence="3">
    <location>
        <begin position="620"/>
        <end position="665"/>
    </location>
</feature>
<feature type="repeat" description="NHL 3" evidence="3">
    <location>
        <begin position="666"/>
        <end position="707"/>
    </location>
</feature>
<feature type="repeat" description="NHL 4" evidence="3">
    <location>
        <begin position="708"/>
        <end position="750"/>
    </location>
</feature>
<feature type="repeat" description="NHL 5" evidence="3">
    <location>
        <begin position="751"/>
        <end position="794"/>
    </location>
</feature>
<feature type="zinc finger region" description="B box-type 1; atypical" evidence="2">
    <location>
        <begin position="127"/>
        <end position="174"/>
    </location>
</feature>
<feature type="zinc finger region" description="B box-type 2" evidence="2">
    <location>
        <begin position="218"/>
        <end position="261"/>
    </location>
</feature>
<feature type="region of interest" description="Disordered" evidence="4">
    <location>
        <begin position="71"/>
        <end position="91"/>
    </location>
</feature>
<feature type="region of interest" description="Disordered" evidence="4">
    <location>
        <begin position="176"/>
        <end position="211"/>
    </location>
</feature>
<feature type="coiled-coil region" evidence="1">
    <location>
        <begin position="303"/>
        <end position="331"/>
    </location>
</feature>
<feature type="compositionally biased region" description="Low complexity" evidence="4">
    <location>
        <begin position="76"/>
        <end position="91"/>
    </location>
</feature>
<feature type="compositionally biased region" description="Low complexity" evidence="4">
    <location>
        <begin position="176"/>
        <end position="197"/>
    </location>
</feature>
<feature type="binding site" evidence="2">
    <location>
        <position position="132"/>
    </location>
    <ligand>
        <name>Zn(2+)</name>
        <dbReference type="ChEBI" id="CHEBI:29105"/>
        <label>1</label>
    </ligand>
</feature>
<feature type="binding site" evidence="2">
    <location>
        <position position="135"/>
    </location>
    <ligand>
        <name>Zn(2+)</name>
        <dbReference type="ChEBI" id="CHEBI:29105"/>
        <label>1</label>
    </ligand>
</feature>
<feature type="binding site" evidence="2">
    <location>
        <position position="156"/>
    </location>
    <ligand>
        <name>Zn(2+)</name>
        <dbReference type="ChEBI" id="CHEBI:29105"/>
        <label>1</label>
    </ligand>
</feature>
<feature type="binding site" evidence="2">
    <location>
        <position position="160"/>
    </location>
    <ligand>
        <name>Zn(2+)</name>
        <dbReference type="ChEBI" id="CHEBI:29105"/>
        <label>1</label>
    </ligand>
</feature>
<feature type="binding site" evidence="2">
    <location>
        <position position="223"/>
    </location>
    <ligand>
        <name>Zn(2+)</name>
        <dbReference type="ChEBI" id="CHEBI:29105"/>
        <label>2</label>
    </ligand>
</feature>
<feature type="binding site" evidence="2">
    <location>
        <position position="226"/>
    </location>
    <ligand>
        <name>Zn(2+)</name>
        <dbReference type="ChEBI" id="CHEBI:29105"/>
        <label>2</label>
    </ligand>
</feature>
<feature type="binding site" evidence="2">
    <location>
        <position position="246"/>
    </location>
    <ligand>
        <name>Zn(2+)</name>
        <dbReference type="ChEBI" id="CHEBI:29105"/>
        <label>2</label>
    </ligand>
</feature>
<feature type="binding site" evidence="2">
    <location>
        <position position="251"/>
    </location>
    <ligand>
        <name>Zn(2+)</name>
        <dbReference type="ChEBI" id="CHEBI:29105"/>
        <label>2</label>
    </ligand>
</feature>
<accession>P34611</accession>
<proteinExistence type="evidence at transcript level"/>
<name>NCL1_CAEEL</name>
<sequence length="851" mass="91955">METQLSVQLGLDSLLTDFGLESVMNKQQQLFANMGLSDIGAPTPSTAIPVPNAHLHPSMVAGSDPSNPVVGFGFGSPSSTTSSSPPLSNSPTIEQQQHAQLTAMMQGIMSNNNVAVSNGSGVQVASVPAVHCSGCKSNETATSFCQDCNANLCDNCTMAHKFMHCFADHRVVSLTTPGTGSSSSSTSSSSSASSTSSHQVPSLGGKQSPDSMMLGSGKRSVLCLQHRASELVFFCVSCNLAICRDCTVSDHPSGTHQYELIADVADKQMLKMEQLIADARSKHADMLDMFKQVDNKQQVLTASLHNAHAQLEETVSNLINVIQDQKKTLAKDIDNAFAAKQIQLTMVDKRIQSMADKLSQTIEFSRRLMSFASPAEVMVFKQLLDTRLQLFLGFNPDTSGVLMTPCEIEYLGAAGLFNNSASTVSQLLGSVHGGSPINNAPAANDFLMPQAGLAPIGRAQSRIIPIEQNQLARSPPHHIAGSLPMNAYSDSNLLRPNKDFGGSSQSLGPFNPLGASVPGAAADPFSSQYDKWSLGVEPSVGGLLEGGNVDEEKFQTLFPPSRSQIKRQKMIYHCKFGEFGVMEGQFTEPSGVAVNGQGDIVVADTNNHRIQVFDKEGRFKFQFGECGKRDGQLLYPNRVAVNRTTGDFVVTERSPTHQIQVYNQYGQFLRKFGANILQHPRGVCVDSKGRIIVVECKVMRVIIFDMFGNILQKFSCSRYLEFPNGVCTNDKNEILISDNRAHCIKVFSYEGQYLRQIGGEGVTNYPIGVGINSLGEVVVADNHNNFNLTVFSQDGTMIGALESRVKHAQCFDVALVDDGSVVLASKDYRLYLYRFLPATSGQSTSSASSQI</sequence>